<accession>Q6L1W3</accession>
<name>ATGT_PICTO</name>
<organism>
    <name type="scientific">Picrophilus torridus (strain ATCC 700027 / DSM 9790 / JCM 10055 / NBRC 100828 / KAW 2/3)</name>
    <dbReference type="NCBI Taxonomy" id="1122961"/>
    <lineage>
        <taxon>Archaea</taxon>
        <taxon>Methanobacteriati</taxon>
        <taxon>Thermoplasmatota</taxon>
        <taxon>Thermoplasmata</taxon>
        <taxon>Thermoplasmatales</taxon>
        <taxon>Picrophilaceae</taxon>
        <taxon>Picrophilus</taxon>
    </lineage>
</organism>
<evidence type="ECO:0000255" key="1">
    <source>
        <dbReference type="HAMAP-Rule" id="MF_01634"/>
    </source>
</evidence>
<reference key="1">
    <citation type="journal article" date="2004" name="Proc. Natl. Acad. Sci. U.S.A.">
        <title>Genome sequence of Picrophilus torridus and its implications for life around pH 0.</title>
        <authorList>
            <person name="Fuetterer O."/>
            <person name="Angelov A."/>
            <person name="Liesegang H."/>
            <person name="Gottschalk G."/>
            <person name="Schleper C."/>
            <person name="Schepers B."/>
            <person name="Dock C."/>
            <person name="Antranikian G."/>
            <person name="Liebl W."/>
        </authorList>
    </citation>
    <scope>NUCLEOTIDE SEQUENCE [LARGE SCALE GENOMIC DNA]</scope>
    <source>
        <strain>ATCC 700027 / DSM 9790 / JCM 10055 / NBRC 100828 / KAW 2/3</strain>
    </source>
</reference>
<comment type="function">
    <text evidence="1">Exchanges the guanine residue with 7-cyano-7-deazaguanine (preQ0) at position 15 in the dihydrouridine loop (D-loop) of archaeal tRNAs.</text>
</comment>
<comment type="catalytic activity">
    <reaction evidence="1">
        <text>guanosine(15) in tRNA + 7-cyano-7-deazaguanine = 7-cyano-7-carbaguanosine(15) in tRNA + guanine</text>
        <dbReference type="Rhea" id="RHEA:43164"/>
        <dbReference type="Rhea" id="RHEA-COMP:10371"/>
        <dbReference type="Rhea" id="RHEA-COMP:10372"/>
        <dbReference type="ChEBI" id="CHEBI:16235"/>
        <dbReference type="ChEBI" id="CHEBI:45075"/>
        <dbReference type="ChEBI" id="CHEBI:74269"/>
        <dbReference type="ChEBI" id="CHEBI:82850"/>
        <dbReference type="EC" id="2.4.2.48"/>
    </reaction>
</comment>
<comment type="cofactor">
    <cofactor evidence="1">
        <name>Zn(2+)</name>
        <dbReference type="ChEBI" id="CHEBI:29105"/>
    </cofactor>
    <text evidence="1">Binds 1 zinc ion per subunit.</text>
</comment>
<comment type="pathway">
    <text evidence="1">tRNA modification; archaeosine-tRNA biosynthesis.</text>
</comment>
<comment type="similarity">
    <text evidence="1">Belongs to the archaeosine tRNA-ribosyltransferase family.</text>
</comment>
<protein>
    <recommendedName>
        <fullName evidence="1">tRNA-guanine(15) transglycosylase</fullName>
        <ecNumber evidence="1">2.4.2.48</ecNumber>
    </recommendedName>
    <alternativeName>
        <fullName evidence="1">7-cyano-7-deazaguanine tRNA-ribosyltransferase</fullName>
    </alternativeName>
    <alternativeName>
        <fullName evidence="1">Archaeal tRNA-guanine transglycosylase</fullName>
    </alternativeName>
</protein>
<proteinExistence type="inferred from homology"/>
<gene>
    <name evidence="1" type="primary">tgtA</name>
    <name type="ordered locus">PTO0454</name>
</gene>
<sequence length="625" mass="72063">MEILFRENLARIARFKTPHGEIETPTVMPVINPNLNFLDESTLRSYGVQAVITNSYIIKRNQRLNEDALRHGLHSLIKFSGPIMTDSGTFQSHVYGDIEYSNKEIVDFQKAIGSDIITILDVFTEPDESYNSARSKVIETYKRLKEIDFEDKIIAGPVQGSIYPDLRRLSAYLMSDALYLPIGGVVPLLESYRYSDLVKIIFNSKVSSDFSRPVHLFGGGHPMFFAFAVMLGVDLFDSASYIKYAKDNRLLYSEGTRALNDIREFPEWSPIHGKYTPQELLHEESEKRTRMLALHNLKSIFIEINEIKERIYENTLYNYVEEKARSHPALFKAFMSMINYDTSDYSPLSYKSPFFYYDKTSLNHPIIKRIMKFTENYISNSRHTLIISSKYWRPGVKNENVIKNIVECTDFNLLVSWNGIYIPLFLEDSYPVQQLVSSGLNDKKLEEDYLKRLKSINNDIEFYEGEHYDKRLRDYDTEKINTIAMFQFNINERFFDKSNIIKSKSTGHIRNIIEDNNIIATMRNDGYLTLSIKGAYRLLSMKPWPGLRVVVDDESGRFNANGYNVFFKFIKSFDTGIIPGNETLVVSEDDDLYAVGKAAVSGIEMYYYKSGVAVKVHEGVNKKAA</sequence>
<keyword id="KW-0328">Glycosyltransferase</keyword>
<keyword id="KW-0479">Metal-binding</keyword>
<keyword id="KW-0808">Transferase</keyword>
<keyword id="KW-0819">tRNA processing</keyword>
<keyword id="KW-0862">Zinc</keyword>
<feature type="chain" id="PRO_0000247880" description="tRNA-guanine(15) transglycosylase">
    <location>
        <begin position="1"/>
        <end position="625"/>
    </location>
</feature>
<feature type="domain" description="PUA" evidence="1">
    <location>
        <begin position="546"/>
        <end position="621"/>
    </location>
</feature>
<feature type="active site" description="Nucleophile" evidence="1">
    <location>
        <position position="86"/>
    </location>
</feature>
<feature type="binding site" evidence="1">
    <location>
        <position position="121"/>
    </location>
    <ligand>
        <name>substrate</name>
    </ligand>
</feature>
<feature type="binding site" evidence="1">
    <location>
        <position position="184"/>
    </location>
    <ligand>
        <name>substrate</name>
    </ligand>
</feature>
<dbReference type="EC" id="2.4.2.48" evidence="1"/>
<dbReference type="EMBL" id="AE017261">
    <property type="protein sequence ID" value="AAT43039.1"/>
    <property type="molecule type" value="Genomic_DNA"/>
</dbReference>
<dbReference type="RefSeq" id="WP_011177255.1">
    <property type="nucleotide sequence ID" value="NC_005877.1"/>
</dbReference>
<dbReference type="SMR" id="Q6L1W3"/>
<dbReference type="FunCoup" id="Q6L1W3">
    <property type="interactions" value="132"/>
</dbReference>
<dbReference type="STRING" id="263820.PTO0454"/>
<dbReference type="PaxDb" id="263820-PTO0454"/>
<dbReference type="GeneID" id="2844755"/>
<dbReference type="KEGG" id="pto:PTO0454"/>
<dbReference type="PATRIC" id="fig|263820.9.peg.479"/>
<dbReference type="eggNOG" id="arCOG00989">
    <property type="taxonomic scope" value="Archaea"/>
</dbReference>
<dbReference type="eggNOG" id="arCOG00991">
    <property type="taxonomic scope" value="Archaea"/>
</dbReference>
<dbReference type="HOGENOM" id="CLU_030083_0_0_2"/>
<dbReference type="InParanoid" id="Q6L1W3"/>
<dbReference type="OrthoDB" id="6871at2157"/>
<dbReference type="UniPathway" id="UPA00393"/>
<dbReference type="Proteomes" id="UP000000438">
    <property type="component" value="Chromosome"/>
</dbReference>
<dbReference type="GO" id="GO:0005737">
    <property type="term" value="C:cytoplasm"/>
    <property type="evidence" value="ECO:0007669"/>
    <property type="project" value="TreeGrafter"/>
</dbReference>
<dbReference type="GO" id="GO:0016763">
    <property type="term" value="F:pentosyltransferase activity"/>
    <property type="evidence" value="ECO:0007669"/>
    <property type="project" value="UniProtKB-UniRule"/>
</dbReference>
<dbReference type="GO" id="GO:0003723">
    <property type="term" value="F:RNA binding"/>
    <property type="evidence" value="ECO:0007669"/>
    <property type="project" value="InterPro"/>
</dbReference>
<dbReference type="GO" id="GO:0008270">
    <property type="term" value="F:zinc ion binding"/>
    <property type="evidence" value="ECO:0007669"/>
    <property type="project" value="UniProtKB-UniRule"/>
</dbReference>
<dbReference type="GO" id="GO:0002099">
    <property type="term" value="P:tRNA wobble guanine modification"/>
    <property type="evidence" value="ECO:0007669"/>
    <property type="project" value="TreeGrafter"/>
</dbReference>
<dbReference type="CDD" id="cd21149">
    <property type="entry name" value="PUA_archaeosine_TGT"/>
    <property type="match status" value="1"/>
</dbReference>
<dbReference type="Gene3D" id="3.10.450.90">
    <property type="entry name" value="ArcTGT, C2 domain"/>
    <property type="match status" value="1"/>
</dbReference>
<dbReference type="Gene3D" id="2.30.130.10">
    <property type="entry name" value="PUA domain"/>
    <property type="match status" value="1"/>
</dbReference>
<dbReference type="Gene3D" id="3.20.20.105">
    <property type="entry name" value="Queuine tRNA-ribosyltransferase-like"/>
    <property type="match status" value="1"/>
</dbReference>
<dbReference type="HAMAP" id="MF_01634">
    <property type="entry name" value="TgtA_arch"/>
    <property type="match status" value="1"/>
</dbReference>
<dbReference type="InterPro" id="IPR050076">
    <property type="entry name" value="ArchSynthase1/Queuine_TRR"/>
</dbReference>
<dbReference type="InterPro" id="IPR002478">
    <property type="entry name" value="PUA"/>
</dbReference>
<dbReference type="InterPro" id="IPR015947">
    <property type="entry name" value="PUA-like_sf"/>
</dbReference>
<dbReference type="InterPro" id="IPR036974">
    <property type="entry name" value="PUA_sf"/>
</dbReference>
<dbReference type="InterPro" id="IPR036511">
    <property type="entry name" value="TGT-like_sf"/>
</dbReference>
<dbReference type="InterPro" id="IPR029402">
    <property type="entry name" value="TGT_C2"/>
</dbReference>
<dbReference type="InterPro" id="IPR038250">
    <property type="entry name" value="TGT_C2_sf"/>
</dbReference>
<dbReference type="InterPro" id="IPR004804">
    <property type="entry name" value="TgtA"/>
</dbReference>
<dbReference type="InterPro" id="IPR002616">
    <property type="entry name" value="tRNA_ribo_trans-like"/>
</dbReference>
<dbReference type="NCBIfam" id="TIGR00432">
    <property type="entry name" value="arcsn_tRNA_tgt"/>
    <property type="match status" value="1"/>
</dbReference>
<dbReference type="NCBIfam" id="TIGR00449">
    <property type="entry name" value="tgt_general"/>
    <property type="match status" value="1"/>
</dbReference>
<dbReference type="PANTHER" id="PTHR46499">
    <property type="entry name" value="QUEUINE TRNA-RIBOSYLTRANSFERASE"/>
    <property type="match status" value="1"/>
</dbReference>
<dbReference type="PANTHER" id="PTHR46499:SF1">
    <property type="entry name" value="QUEUINE TRNA-RIBOSYLTRANSFERASE"/>
    <property type="match status" value="1"/>
</dbReference>
<dbReference type="Pfam" id="PF01472">
    <property type="entry name" value="PUA"/>
    <property type="match status" value="1"/>
</dbReference>
<dbReference type="Pfam" id="PF01702">
    <property type="entry name" value="TGT"/>
    <property type="match status" value="1"/>
</dbReference>
<dbReference type="Pfam" id="PF14810">
    <property type="entry name" value="TGT_C2"/>
    <property type="match status" value="1"/>
</dbReference>
<dbReference type="SMART" id="SM00359">
    <property type="entry name" value="PUA"/>
    <property type="match status" value="1"/>
</dbReference>
<dbReference type="SUPFAM" id="SSF88802">
    <property type="entry name" value="Pre-PUA domain"/>
    <property type="match status" value="1"/>
</dbReference>
<dbReference type="SUPFAM" id="SSF88697">
    <property type="entry name" value="PUA domain-like"/>
    <property type="match status" value="1"/>
</dbReference>
<dbReference type="SUPFAM" id="SSF51713">
    <property type="entry name" value="tRNA-guanine transglycosylase"/>
    <property type="match status" value="1"/>
</dbReference>
<dbReference type="PROSITE" id="PS50890">
    <property type="entry name" value="PUA"/>
    <property type="match status" value="1"/>
</dbReference>